<accession>Q74H35</accession>
<comment type="function">
    <text evidence="1">CRISPR (clustered regularly interspaced short palindromic repeat), is an adaptive immune system that provides protection against mobile genetic elements (viruses, transposable elements and conjugative plasmids). CRISPR clusters contain sequences complementary to antecedent mobile elements and target invading nucleic acids. CRISPR clusters are transcribed and processed into CRISPR RNA (crRNA). Functions as a ssRNA-specific endoribonuclease. Involved in the integration of spacer DNA into the CRISPR cassette.</text>
</comment>
<comment type="cofactor">
    <cofactor evidence="1">
        <name>Mg(2+)</name>
        <dbReference type="ChEBI" id="CHEBI:18420"/>
    </cofactor>
</comment>
<comment type="subunit">
    <text evidence="1">Homodimer, forms a heterotetramer with a Cas1 homodimer.</text>
</comment>
<comment type="similarity">
    <text evidence="1">Belongs to the CRISPR-associated endoribonuclease Cas2 protein family.</text>
</comment>
<name>CAS2_GEOSL</name>
<feature type="chain" id="PRO_0000417715" description="CRISPR-associated endoribonuclease Cas2">
    <location>
        <begin position="1"/>
        <end position="95"/>
    </location>
</feature>
<feature type="binding site" evidence="1">
    <location>
        <position position="10"/>
    </location>
    <ligand>
        <name>Mg(2+)</name>
        <dbReference type="ChEBI" id="CHEBI:18420"/>
        <note>catalytic</note>
    </ligand>
</feature>
<feature type="strand" evidence="2">
    <location>
        <begin position="3"/>
        <end position="10"/>
    </location>
</feature>
<feature type="helix" evidence="2">
    <location>
        <begin position="14"/>
        <end position="27"/>
    </location>
</feature>
<feature type="strand" evidence="2">
    <location>
        <begin position="28"/>
        <end position="32"/>
    </location>
</feature>
<feature type="strand" evidence="2">
    <location>
        <begin position="35"/>
        <end position="40"/>
    </location>
</feature>
<feature type="helix" evidence="2">
    <location>
        <begin position="42"/>
        <end position="51"/>
    </location>
</feature>
<feature type="turn" evidence="2">
    <location>
        <begin position="52"/>
        <end position="54"/>
    </location>
</feature>
<feature type="turn" evidence="2">
    <location>
        <begin position="58"/>
        <end position="60"/>
    </location>
</feature>
<feature type="strand" evidence="2">
    <location>
        <begin position="62"/>
        <end position="73"/>
    </location>
</feature>
<feature type="helix" evidence="2">
    <location>
        <begin position="75"/>
        <end position="77"/>
    </location>
</feature>
<feature type="strand" evidence="2">
    <location>
        <begin position="78"/>
        <end position="83"/>
    </location>
</feature>
<dbReference type="EC" id="3.1.-.-" evidence="1"/>
<dbReference type="EMBL" id="AE017180">
    <property type="protein sequence ID" value="AAR33393.1"/>
    <property type="molecule type" value="Genomic_DNA"/>
</dbReference>
<dbReference type="RefSeq" id="NP_951120.1">
    <property type="nucleotide sequence ID" value="NC_002939.5"/>
</dbReference>
<dbReference type="RefSeq" id="WP_010940736.1">
    <property type="nucleotide sequence ID" value="NC_002939.5"/>
</dbReference>
<dbReference type="PDB" id="7MI4">
    <property type="method" value="EM"/>
    <property type="resolution" value="3.20 A"/>
    <property type="chains" value="E/F=1-95"/>
</dbReference>
<dbReference type="PDB" id="7MI5">
    <property type="method" value="EM"/>
    <property type="resolution" value="3.57 A"/>
    <property type="chains" value="E/F=1-95"/>
</dbReference>
<dbReference type="PDB" id="7MI9">
    <property type="method" value="EM"/>
    <property type="resolution" value="3.89 A"/>
    <property type="chains" value="E/F=1-95"/>
</dbReference>
<dbReference type="PDB" id="7MIB">
    <property type="method" value="EM"/>
    <property type="resolution" value="5.80 A"/>
    <property type="chains" value="E/F=1-95"/>
</dbReference>
<dbReference type="PDB" id="7MID">
    <property type="method" value="EM"/>
    <property type="resolution" value="3.56 A"/>
    <property type="chains" value="C/D=1-95"/>
</dbReference>
<dbReference type="PDBsum" id="7MI4"/>
<dbReference type="PDBsum" id="7MI5"/>
<dbReference type="PDBsum" id="7MI9"/>
<dbReference type="PDBsum" id="7MIB"/>
<dbReference type="PDBsum" id="7MID"/>
<dbReference type="EMDB" id="EMD-23839"/>
<dbReference type="EMDB" id="EMD-23840"/>
<dbReference type="EMDB" id="EMD-23843"/>
<dbReference type="EMDB" id="EMD-23845"/>
<dbReference type="EMDB" id="EMD-23847"/>
<dbReference type="SMR" id="Q74H35"/>
<dbReference type="STRING" id="243231.GSU0058"/>
<dbReference type="DNASU" id="2688484"/>
<dbReference type="EnsemblBacteria" id="AAR33393">
    <property type="protein sequence ID" value="AAR33393"/>
    <property type="gene ID" value="GSU0058"/>
</dbReference>
<dbReference type="KEGG" id="gsu:GSU0058"/>
<dbReference type="PATRIC" id="fig|243231.5.peg.58"/>
<dbReference type="eggNOG" id="COG1343">
    <property type="taxonomic scope" value="Bacteria"/>
</dbReference>
<dbReference type="HOGENOM" id="CLU_161124_3_1_7"/>
<dbReference type="InParanoid" id="Q74H35"/>
<dbReference type="OrthoDB" id="9798176at2"/>
<dbReference type="Proteomes" id="UP000000577">
    <property type="component" value="Chromosome"/>
</dbReference>
<dbReference type="GO" id="GO:0046872">
    <property type="term" value="F:metal ion binding"/>
    <property type="evidence" value="ECO:0007669"/>
    <property type="project" value="UniProtKB-UniRule"/>
</dbReference>
<dbReference type="GO" id="GO:0004521">
    <property type="term" value="F:RNA endonuclease activity"/>
    <property type="evidence" value="ECO:0007669"/>
    <property type="project" value="InterPro"/>
</dbReference>
<dbReference type="GO" id="GO:0051607">
    <property type="term" value="P:defense response to virus"/>
    <property type="evidence" value="ECO:0007669"/>
    <property type="project" value="UniProtKB-UniRule"/>
</dbReference>
<dbReference type="GO" id="GO:0043571">
    <property type="term" value="P:maintenance of CRISPR repeat elements"/>
    <property type="evidence" value="ECO:0007669"/>
    <property type="project" value="UniProtKB-UniRule"/>
</dbReference>
<dbReference type="CDD" id="cd09725">
    <property type="entry name" value="Cas2_I_II_III"/>
    <property type="match status" value="1"/>
</dbReference>
<dbReference type="Gene3D" id="3.30.70.240">
    <property type="match status" value="1"/>
</dbReference>
<dbReference type="HAMAP" id="MF_01471">
    <property type="entry name" value="Cas2"/>
    <property type="match status" value="1"/>
</dbReference>
<dbReference type="InterPro" id="IPR021127">
    <property type="entry name" value="CRISPR_associated_Cas2"/>
</dbReference>
<dbReference type="InterPro" id="IPR019199">
    <property type="entry name" value="Virulence_VapD/CRISPR_Cas2"/>
</dbReference>
<dbReference type="NCBIfam" id="TIGR01573">
    <property type="entry name" value="cas2"/>
    <property type="match status" value="1"/>
</dbReference>
<dbReference type="PANTHER" id="PTHR34405">
    <property type="entry name" value="CRISPR-ASSOCIATED ENDORIBONUCLEASE CAS2"/>
    <property type="match status" value="1"/>
</dbReference>
<dbReference type="PANTHER" id="PTHR34405:SF3">
    <property type="entry name" value="CRISPR-ASSOCIATED ENDORIBONUCLEASE CAS2 3"/>
    <property type="match status" value="1"/>
</dbReference>
<dbReference type="Pfam" id="PF09827">
    <property type="entry name" value="CRISPR_Cas2"/>
    <property type="match status" value="1"/>
</dbReference>
<dbReference type="SUPFAM" id="SSF143430">
    <property type="entry name" value="TTP0101/SSO1404-like"/>
    <property type="match status" value="1"/>
</dbReference>
<reference key="1">
    <citation type="journal article" date="2003" name="Science">
        <title>Genome of Geobacter sulfurreducens: metal reduction in subsurface environments.</title>
        <authorList>
            <person name="Methe B.A."/>
            <person name="Nelson K.E."/>
            <person name="Eisen J.A."/>
            <person name="Paulsen I.T."/>
            <person name="Nelson W.C."/>
            <person name="Heidelberg J.F."/>
            <person name="Wu D."/>
            <person name="Wu M."/>
            <person name="Ward N.L."/>
            <person name="Beanan M.J."/>
            <person name="Dodson R.J."/>
            <person name="Madupu R."/>
            <person name="Brinkac L.M."/>
            <person name="Daugherty S.C."/>
            <person name="DeBoy R.T."/>
            <person name="Durkin A.S."/>
            <person name="Gwinn M.L."/>
            <person name="Kolonay J.F."/>
            <person name="Sullivan S.A."/>
            <person name="Haft D.H."/>
            <person name="Selengut J."/>
            <person name="Davidsen T.M."/>
            <person name="Zafar N."/>
            <person name="White O."/>
            <person name="Tran B."/>
            <person name="Romero C."/>
            <person name="Forberger H.A."/>
            <person name="Weidman J.F."/>
            <person name="Khouri H.M."/>
            <person name="Feldblyum T.V."/>
            <person name="Utterback T.R."/>
            <person name="Van Aken S.E."/>
            <person name="Lovley D.R."/>
            <person name="Fraser C.M."/>
        </authorList>
    </citation>
    <scope>NUCLEOTIDE SEQUENCE [LARGE SCALE GENOMIC DNA]</scope>
    <source>
        <strain>ATCC 51573 / DSM 12127 / PCA</strain>
    </source>
</reference>
<proteinExistence type="evidence at protein level"/>
<gene>
    <name evidence="1" type="primary">cas2</name>
    <name type="ordered locus">GSU0058</name>
</gene>
<keyword id="KW-0002">3D-structure</keyword>
<keyword id="KW-0051">Antiviral defense</keyword>
<keyword id="KW-0255">Endonuclease</keyword>
<keyword id="KW-0378">Hydrolase</keyword>
<keyword id="KW-0460">Magnesium</keyword>
<keyword id="KW-0479">Metal-binding</keyword>
<keyword id="KW-0540">Nuclease</keyword>
<keyword id="KW-1185">Reference proteome</keyword>
<evidence type="ECO:0000255" key="1">
    <source>
        <dbReference type="HAMAP-Rule" id="MF_01471"/>
    </source>
</evidence>
<evidence type="ECO:0007829" key="2">
    <source>
        <dbReference type="PDB" id="7MI4"/>
    </source>
</evidence>
<organism>
    <name type="scientific">Geobacter sulfurreducens (strain ATCC 51573 / DSM 12127 / PCA)</name>
    <dbReference type="NCBI Taxonomy" id="243231"/>
    <lineage>
        <taxon>Bacteria</taxon>
        <taxon>Pseudomonadati</taxon>
        <taxon>Thermodesulfobacteriota</taxon>
        <taxon>Desulfuromonadia</taxon>
        <taxon>Geobacterales</taxon>
        <taxon>Geobacteraceae</taxon>
        <taxon>Geobacter</taxon>
    </lineage>
</organism>
<sequence>MEHLYIVSYDIRNQRRWRRLFKTMHGFGCWLQLSVFQCRLDRIRIIKMEAAINEIVNHAEDHVLILDLGPAENVKPKVSSIGKTFDPILRQAVIV</sequence>
<protein>
    <recommendedName>
        <fullName evidence="1">CRISPR-associated endoribonuclease Cas2</fullName>
        <ecNumber evidence="1">3.1.-.-</ecNumber>
    </recommendedName>
</protein>